<protein>
    <recommendedName>
        <fullName evidence="1">Exodeoxyribonuclease 7 small subunit</fullName>
        <ecNumber evidence="1">3.1.11.6</ecNumber>
    </recommendedName>
    <alternativeName>
        <fullName evidence="1">Exodeoxyribonuclease VII small subunit</fullName>
        <shortName evidence="1">Exonuclease VII small subunit</shortName>
    </alternativeName>
</protein>
<evidence type="ECO:0000255" key="1">
    <source>
        <dbReference type="HAMAP-Rule" id="MF_00337"/>
    </source>
</evidence>
<reference key="1">
    <citation type="journal article" date="2010" name="Genome Biol.">
        <title>Structure and dynamics of the pan-genome of Streptococcus pneumoniae and closely related species.</title>
        <authorList>
            <person name="Donati C."/>
            <person name="Hiller N.L."/>
            <person name="Tettelin H."/>
            <person name="Muzzi A."/>
            <person name="Croucher N.J."/>
            <person name="Angiuoli S.V."/>
            <person name="Oggioni M."/>
            <person name="Dunning Hotopp J.C."/>
            <person name="Hu F.Z."/>
            <person name="Riley D.R."/>
            <person name="Covacci A."/>
            <person name="Mitchell T.J."/>
            <person name="Bentley S.D."/>
            <person name="Kilian M."/>
            <person name="Ehrlich G.D."/>
            <person name="Rappuoli R."/>
            <person name="Moxon E.R."/>
            <person name="Masignani V."/>
        </authorList>
    </citation>
    <scope>NUCLEOTIDE SEQUENCE [LARGE SCALE GENOMIC DNA]</scope>
    <source>
        <strain>Hungary19A-6</strain>
    </source>
</reference>
<accession>B1IC08</accession>
<organism>
    <name type="scientific">Streptococcus pneumoniae (strain Hungary19A-6)</name>
    <dbReference type="NCBI Taxonomy" id="487214"/>
    <lineage>
        <taxon>Bacteria</taxon>
        <taxon>Bacillati</taxon>
        <taxon>Bacillota</taxon>
        <taxon>Bacilli</taxon>
        <taxon>Lactobacillales</taxon>
        <taxon>Streptococcaceae</taxon>
        <taxon>Streptococcus</taxon>
    </lineage>
</organism>
<proteinExistence type="inferred from homology"/>
<sequence length="70" mass="7850">MSKQKKFEENLAELETIVQSLENGEIALEDAITAFQKGMVLSKELQATLDKAEKTLVKVMQEDGTESDFE</sequence>
<gene>
    <name evidence="1" type="primary">xseB</name>
    <name type="ordered locus">SPH_1324</name>
</gene>
<dbReference type="EC" id="3.1.11.6" evidence="1"/>
<dbReference type="EMBL" id="CP000936">
    <property type="protein sequence ID" value="ACA37386.1"/>
    <property type="molecule type" value="Genomic_DNA"/>
</dbReference>
<dbReference type="RefSeq" id="WP_000043230.1">
    <property type="nucleotide sequence ID" value="NC_010380.1"/>
</dbReference>
<dbReference type="SMR" id="B1IC08"/>
<dbReference type="KEGG" id="spv:SPH_1324"/>
<dbReference type="HOGENOM" id="CLU_145918_3_2_9"/>
<dbReference type="Proteomes" id="UP000002163">
    <property type="component" value="Chromosome"/>
</dbReference>
<dbReference type="GO" id="GO:0005829">
    <property type="term" value="C:cytosol"/>
    <property type="evidence" value="ECO:0007669"/>
    <property type="project" value="TreeGrafter"/>
</dbReference>
<dbReference type="GO" id="GO:0009318">
    <property type="term" value="C:exodeoxyribonuclease VII complex"/>
    <property type="evidence" value="ECO:0007669"/>
    <property type="project" value="InterPro"/>
</dbReference>
<dbReference type="GO" id="GO:0008855">
    <property type="term" value="F:exodeoxyribonuclease VII activity"/>
    <property type="evidence" value="ECO:0007669"/>
    <property type="project" value="UniProtKB-UniRule"/>
</dbReference>
<dbReference type="GO" id="GO:0006308">
    <property type="term" value="P:DNA catabolic process"/>
    <property type="evidence" value="ECO:0007669"/>
    <property type="project" value="UniProtKB-UniRule"/>
</dbReference>
<dbReference type="FunFam" id="1.10.287.1040:FF:000003">
    <property type="entry name" value="Exodeoxyribonuclease 7 small subunit"/>
    <property type="match status" value="1"/>
</dbReference>
<dbReference type="Gene3D" id="1.10.287.1040">
    <property type="entry name" value="Exonuclease VII, small subunit"/>
    <property type="match status" value="1"/>
</dbReference>
<dbReference type="HAMAP" id="MF_00337">
    <property type="entry name" value="Exonuc_7_S"/>
    <property type="match status" value="1"/>
</dbReference>
<dbReference type="InterPro" id="IPR003761">
    <property type="entry name" value="Exonuc_VII_S"/>
</dbReference>
<dbReference type="InterPro" id="IPR037004">
    <property type="entry name" value="Exonuc_VII_ssu_sf"/>
</dbReference>
<dbReference type="NCBIfam" id="NF002138">
    <property type="entry name" value="PRK00977.1-2"/>
    <property type="match status" value="1"/>
</dbReference>
<dbReference type="NCBIfam" id="TIGR01280">
    <property type="entry name" value="xseB"/>
    <property type="match status" value="1"/>
</dbReference>
<dbReference type="PANTHER" id="PTHR34137">
    <property type="entry name" value="EXODEOXYRIBONUCLEASE 7 SMALL SUBUNIT"/>
    <property type="match status" value="1"/>
</dbReference>
<dbReference type="PANTHER" id="PTHR34137:SF1">
    <property type="entry name" value="EXODEOXYRIBONUCLEASE 7 SMALL SUBUNIT"/>
    <property type="match status" value="1"/>
</dbReference>
<dbReference type="Pfam" id="PF02609">
    <property type="entry name" value="Exonuc_VII_S"/>
    <property type="match status" value="1"/>
</dbReference>
<dbReference type="PIRSF" id="PIRSF006488">
    <property type="entry name" value="Exonuc_VII_S"/>
    <property type="match status" value="1"/>
</dbReference>
<dbReference type="SUPFAM" id="SSF116842">
    <property type="entry name" value="XseB-like"/>
    <property type="match status" value="1"/>
</dbReference>
<feature type="chain" id="PRO_1000119962" description="Exodeoxyribonuclease 7 small subunit">
    <location>
        <begin position="1"/>
        <end position="70"/>
    </location>
</feature>
<name>EX7S_STRPI</name>
<keyword id="KW-0963">Cytoplasm</keyword>
<keyword id="KW-0269">Exonuclease</keyword>
<keyword id="KW-0378">Hydrolase</keyword>
<keyword id="KW-0540">Nuclease</keyword>
<comment type="function">
    <text evidence="1">Bidirectionally degrades single-stranded DNA into large acid-insoluble oligonucleotides, which are then degraded further into small acid-soluble oligonucleotides.</text>
</comment>
<comment type="catalytic activity">
    <reaction evidence="1">
        <text>Exonucleolytic cleavage in either 5'- to 3'- or 3'- to 5'-direction to yield nucleoside 5'-phosphates.</text>
        <dbReference type="EC" id="3.1.11.6"/>
    </reaction>
</comment>
<comment type="subunit">
    <text evidence="1">Heterooligomer composed of large and small subunits.</text>
</comment>
<comment type="subcellular location">
    <subcellularLocation>
        <location evidence="1">Cytoplasm</location>
    </subcellularLocation>
</comment>
<comment type="similarity">
    <text evidence="1">Belongs to the XseB family.</text>
</comment>